<proteinExistence type="inferred from homology"/>
<feature type="chain" id="PRO_0000129237" description="Large ribosomal subunit protein uL4">
    <location>
        <begin position="1"/>
        <end position="208"/>
    </location>
</feature>
<feature type="region of interest" description="Disordered" evidence="2">
    <location>
        <begin position="50"/>
        <end position="83"/>
    </location>
</feature>
<feature type="sequence conflict" description="In Ref. 1; CAA29705." evidence="3" ref="1">
    <original>R</original>
    <variation>L</variation>
    <location>
        <position position="71"/>
    </location>
</feature>
<feature type="sequence conflict" description="In Ref. 1; CAA29705." evidence="3" ref="1">
    <original>G</original>
    <variation>E</variation>
    <location>
        <position position="86"/>
    </location>
</feature>
<accession>P10135</accession>
<accession>Q2SRF4</accession>
<dbReference type="EMBL" id="X06414">
    <property type="protein sequence ID" value="CAA29705.1"/>
    <property type="molecule type" value="Genomic_DNA"/>
</dbReference>
<dbReference type="EMBL" id="CP000123">
    <property type="protein sequence ID" value="ABC01153.1"/>
    <property type="molecule type" value="Genomic_DNA"/>
</dbReference>
<dbReference type="PIR" id="S02832">
    <property type="entry name" value="R5YM4C"/>
</dbReference>
<dbReference type="RefSeq" id="WP_011387543.1">
    <property type="nucleotide sequence ID" value="NC_007633.1"/>
</dbReference>
<dbReference type="SMR" id="P10135"/>
<dbReference type="GeneID" id="23778351"/>
<dbReference type="KEGG" id="mcp:MCAP_0695"/>
<dbReference type="HOGENOM" id="CLU_041575_5_2_14"/>
<dbReference type="PhylomeDB" id="P10135"/>
<dbReference type="Proteomes" id="UP000001928">
    <property type="component" value="Chromosome"/>
</dbReference>
<dbReference type="GO" id="GO:1990904">
    <property type="term" value="C:ribonucleoprotein complex"/>
    <property type="evidence" value="ECO:0007669"/>
    <property type="project" value="UniProtKB-KW"/>
</dbReference>
<dbReference type="GO" id="GO:0005840">
    <property type="term" value="C:ribosome"/>
    <property type="evidence" value="ECO:0007669"/>
    <property type="project" value="UniProtKB-KW"/>
</dbReference>
<dbReference type="GO" id="GO:0019843">
    <property type="term" value="F:rRNA binding"/>
    <property type="evidence" value="ECO:0007669"/>
    <property type="project" value="UniProtKB-UniRule"/>
</dbReference>
<dbReference type="GO" id="GO:0003735">
    <property type="term" value="F:structural constituent of ribosome"/>
    <property type="evidence" value="ECO:0007669"/>
    <property type="project" value="InterPro"/>
</dbReference>
<dbReference type="GO" id="GO:0006412">
    <property type="term" value="P:translation"/>
    <property type="evidence" value="ECO:0007669"/>
    <property type="project" value="UniProtKB-UniRule"/>
</dbReference>
<dbReference type="Gene3D" id="3.40.1370.10">
    <property type="match status" value="1"/>
</dbReference>
<dbReference type="HAMAP" id="MF_01328_B">
    <property type="entry name" value="Ribosomal_uL4_B"/>
    <property type="match status" value="1"/>
</dbReference>
<dbReference type="InterPro" id="IPR002136">
    <property type="entry name" value="Ribosomal_uL4"/>
</dbReference>
<dbReference type="InterPro" id="IPR013005">
    <property type="entry name" value="Ribosomal_uL4-like"/>
</dbReference>
<dbReference type="InterPro" id="IPR023574">
    <property type="entry name" value="Ribosomal_uL4_dom_sf"/>
</dbReference>
<dbReference type="NCBIfam" id="TIGR03953">
    <property type="entry name" value="rplD_bact"/>
    <property type="match status" value="1"/>
</dbReference>
<dbReference type="PANTHER" id="PTHR10746">
    <property type="entry name" value="50S RIBOSOMAL PROTEIN L4"/>
    <property type="match status" value="1"/>
</dbReference>
<dbReference type="PANTHER" id="PTHR10746:SF6">
    <property type="entry name" value="LARGE RIBOSOMAL SUBUNIT PROTEIN UL4M"/>
    <property type="match status" value="1"/>
</dbReference>
<dbReference type="Pfam" id="PF00573">
    <property type="entry name" value="Ribosomal_L4"/>
    <property type="match status" value="1"/>
</dbReference>
<dbReference type="SUPFAM" id="SSF52166">
    <property type="entry name" value="Ribosomal protein L4"/>
    <property type="match status" value="1"/>
</dbReference>
<sequence>MKLQVLDTKGNEIKEIALNDYVWGIEPHQQAIYDTVISQQAALRQGTKKVKTRAEVSGGGRKPWKQKGTGRARQGSIRAPQWKGGGVTFGPTPDINYKKSVNKKVRALAFRSVLSLKVKENNLVIVDKFDFAKPSTKEMVVVMKNLKIDDQKTLIVTKEKEELVVKSSNNITGVKTISANQLNVFDLLNATKLLITEEAAIAVEEVYA</sequence>
<name>RL4_MYCCT</name>
<evidence type="ECO:0000255" key="1">
    <source>
        <dbReference type="HAMAP-Rule" id="MF_01328"/>
    </source>
</evidence>
<evidence type="ECO:0000256" key="2">
    <source>
        <dbReference type="SAM" id="MobiDB-lite"/>
    </source>
</evidence>
<evidence type="ECO:0000305" key="3"/>
<keyword id="KW-0687">Ribonucleoprotein</keyword>
<keyword id="KW-0689">Ribosomal protein</keyword>
<keyword id="KW-0694">RNA-binding</keyword>
<keyword id="KW-0699">rRNA-binding</keyword>
<organism>
    <name type="scientific">Mycoplasma capricolum subsp. capricolum (strain California kid / ATCC 27343 / NCTC 10154)</name>
    <dbReference type="NCBI Taxonomy" id="340047"/>
    <lineage>
        <taxon>Bacteria</taxon>
        <taxon>Bacillati</taxon>
        <taxon>Mycoplasmatota</taxon>
        <taxon>Mollicutes</taxon>
        <taxon>Mycoplasmataceae</taxon>
        <taxon>Mycoplasma</taxon>
    </lineage>
</organism>
<comment type="function">
    <text evidence="1">One of the primary rRNA binding proteins, this protein initially binds near the 5'-end of the 23S rRNA. It is important during the early stages of 50S assembly. It makes multiple contacts with different domains of the 23S rRNA in the assembled 50S subunit and ribosome.</text>
</comment>
<comment type="function">
    <text evidence="1">Forms part of the polypeptide exit tunnel.</text>
</comment>
<comment type="subunit">
    <text evidence="1">Part of the 50S ribosomal subunit.</text>
</comment>
<comment type="similarity">
    <text evidence="1">Belongs to the universal ribosomal protein uL4 family.</text>
</comment>
<protein>
    <recommendedName>
        <fullName evidence="1">Large ribosomal subunit protein uL4</fullName>
    </recommendedName>
    <alternativeName>
        <fullName evidence="3">50S ribosomal protein L4</fullName>
    </alternativeName>
</protein>
<gene>
    <name evidence="1" type="primary">rplD</name>
    <name type="ordered locus">MCAP_0695</name>
</gene>
<reference key="1">
    <citation type="journal article" date="1987" name="Mol. Gen. Genet.">
        <title>The ribosomal protein gene cluster of Mycoplasma capricolum.</title>
        <authorList>
            <person name="Ohkubo S."/>
            <person name="Muto A."/>
            <person name="Kawauchi Y."/>
            <person name="Yamao F."/>
            <person name="Osawa S."/>
        </authorList>
    </citation>
    <scope>NUCLEOTIDE SEQUENCE [GENOMIC DNA]</scope>
</reference>
<reference key="2">
    <citation type="submission" date="2005-09" db="EMBL/GenBank/DDBJ databases">
        <authorList>
            <person name="Glass J.I."/>
            <person name="Lartigue C."/>
            <person name="Pfannkoch C."/>
            <person name="Baden-Tillson H."/>
            <person name="Smith H.O."/>
            <person name="Venter J.C."/>
            <person name="Roske K."/>
            <person name="Wise K.S."/>
            <person name="Calcutt M.J."/>
            <person name="Nelson W.C."/>
            <person name="Nierman W.C."/>
        </authorList>
    </citation>
    <scope>NUCLEOTIDE SEQUENCE [LARGE SCALE GENOMIC DNA]</scope>
    <source>
        <strain>California kid / ATCC 27343 / NCTC 10154</strain>
    </source>
</reference>